<dbReference type="EMBL" id="U59502">
    <property type="protein sequence ID" value="AAC32028.2"/>
    <property type="molecule type" value="Genomic_DNA"/>
</dbReference>
<dbReference type="EMBL" id="AF132728">
    <property type="protein sequence ID" value="AAD27868.1"/>
    <property type="molecule type" value="Genomic_DNA"/>
</dbReference>
<dbReference type="EMBL" id="AF113597">
    <property type="protein sequence ID" value="AAF03080.1"/>
    <property type="molecule type" value="Genomic_DNA"/>
</dbReference>
<dbReference type="EMBL" id="FM201463">
    <property type="protein sequence ID" value="CAR47988.1"/>
    <property type="molecule type" value="Genomic_DNA"/>
</dbReference>
<dbReference type="EMBL" id="FM201464">
    <property type="protein sequence ID" value="CAR48058.1"/>
    <property type="molecule type" value="Genomic_DNA"/>
</dbReference>
<dbReference type="RefSeq" id="WP_001121330.1">
    <property type="nucleotide sequence ID" value="NZ_WJGB01000091.1"/>
</dbReference>
<dbReference type="SMR" id="P0DJ91"/>
<dbReference type="GO" id="GO:0005576">
    <property type="term" value="C:extracellular region"/>
    <property type="evidence" value="ECO:0007669"/>
    <property type="project" value="UniProtKB-SubCell"/>
</dbReference>
<dbReference type="GO" id="GO:0020002">
    <property type="term" value="C:host cell plasma membrane"/>
    <property type="evidence" value="ECO:0007669"/>
    <property type="project" value="UniProtKB-SubCell"/>
</dbReference>
<dbReference type="GO" id="GO:0016020">
    <property type="term" value="C:membrane"/>
    <property type="evidence" value="ECO:0007669"/>
    <property type="project" value="UniProtKB-KW"/>
</dbReference>
<dbReference type="Gene3D" id="4.10.820.10">
    <property type="entry name" value="Translocated intimin receptor, central domain"/>
    <property type="match status" value="1"/>
</dbReference>
<dbReference type="InterPro" id="IPR037003">
    <property type="entry name" value="Tir_central_sf"/>
</dbReference>
<dbReference type="InterPro" id="IPR022638">
    <property type="entry name" value="Transloc_intimin_rcpt"/>
</dbReference>
<dbReference type="InterPro" id="IPR022639">
    <property type="entry name" value="Transloc_intimin_rcpt_C"/>
</dbReference>
<dbReference type="InterPro" id="IPR003536">
    <property type="entry name" value="Transloc_intimin_rcpt_cen_dom"/>
</dbReference>
<dbReference type="InterPro" id="IPR022633">
    <property type="entry name" value="Transloc_intimin_rcpt_N"/>
</dbReference>
<dbReference type="NCBIfam" id="NF033637">
    <property type="entry name" value="transloc_TIR"/>
    <property type="match status" value="1"/>
</dbReference>
<dbReference type="Pfam" id="PF07489">
    <property type="entry name" value="Tir_receptor_C"/>
    <property type="match status" value="1"/>
</dbReference>
<dbReference type="Pfam" id="PF03549">
    <property type="entry name" value="Tir_receptor_M"/>
    <property type="match status" value="1"/>
</dbReference>
<dbReference type="Pfam" id="PF07490">
    <property type="entry name" value="Tir_receptor_N"/>
    <property type="match status" value="1"/>
</dbReference>
<dbReference type="PRINTS" id="PR01370">
    <property type="entry name" value="TRNSINTIMINR"/>
</dbReference>
<accession>P0DJ91</accession>
<accession>Q47014</accession>
<gene>
    <name type="primary">tir</name>
    <name type="synonym">espE</name>
</gene>
<keyword id="KW-1032">Host cell membrane</keyword>
<keyword id="KW-1043">Host membrane</keyword>
<keyword id="KW-0472">Membrane</keyword>
<keyword id="KW-0597">Phosphoprotein</keyword>
<keyword id="KW-0675">Receptor</keyword>
<keyword id="KW-0964">Secreted</keyword>
<keyword id="KW-0812">Transmembrane</keyword>
<keyword id="KW-1133">Transmembrane helix</keyword>
<keyword id="KW-0843">Virulence</keyword>
<sequence>MPIGNLGHNPNVRALIPPAPPLPSQTDGAGGARNQLINSNGPMGSRLLFTPIRNSVADAADSRASDIPGLPTNPLRFAASEVSLHGALEVLHDKGGLDTLNSAIGSSLFRVETRDDGSHVAIGQKNGLETTVVLSEQEFSSLQSLDPEGKNKFVFTGGRGGAGHAMVTVASDIAEARQRIIDKLEPKDTKETKEPGDPNSGEGKIIEIHTSTSTSSLRADPKLWLSLGTIAAGLIGMAATGIAQAVALTPEPDDPITTDPDAAANTAEAAAKDQLTKEAFQNPDNQKVNIDENGNAIPSGELKDDVVAQIAEQAKAAGEQARQEAIESNSQAQQKYDEQHAKREQEMSLSSGVGYGISGALILGGGIGAGVTAALHRKNQPAEQTITTRTVVDNQPTNNASAQGNTDTSGPEESPASRRNSNASLASNGSDTSSTGTVENPYADVGMPRNDSLARISEEPIYDEVAADPNYSVIQHFSGNSPVTGRLVGTPGQGIQSTYALLASSGGLRLGMGGLTGGGESAVSTANAAPTPGPARFV</sequence>
<reference key="1">
    <citation type="submission" date="1999-03" db="EMBL/GenBank/DDBJ databases">
        <authorList>
            <person name="Krejany E.O."/>
        </authorList>
    </citation>
    <scope>NUCLEOTIDE SEQUENCE [GENOMIC DNA]</scope>
    <source>
        <strain>84/110/1 / EPEC</strain>
        <strain>O26:K60:H- / E65/56 / EPEC</strain>
    </source>
</reference>
<reference key="2">
    <citation type="journal article" date="2000" name="Infect. Immun.">
        <title>Role of tir and intimin in the virulence of rabbit enteropathogenic Escherichia coli serotype O103:H2.</title>
        <authorList>
            <person name="Marches O."/>
            <person name="Nougayrede J.-P."/>
            <person name="Boullier S."/>
            <person name="Mainil J."/>
            <person name="Charlier G."/>
            <person name="Raymond I."/>
            <person name="Pohl P."/>
            <person name="Boury M."/>
            <person name="De Rycke J."/>
            <person name="Milon A."/>
            <person name="Oswald E."/>
        </authorList>
    </citation>
    <scope>NUCLEOTIDE SEQUENCE [GENOMIC DNA]</scope>
    <scope>FUNCTION IN VIRULENCE</scope>
    <scope>DISRUPTION PHENOTYPE</scope>
    <source>
        <strain>O103:K-:H2 / E22 / EPEC</strain>
    </source>
</reference>
<reference key="3">
    <citation type="journal article" date="2009" name="Infect. Immun.">
        <title>Comparative analysis of the locus of enterocyte effacement and its flanking regions.</title>
        <authorList>
            <person name="Muller D."/>
            <person name="Benz I."/>
            <person name="Liebchen A."/>
            <person name="Gallitz I."/>
            <person name="Karch H."/>
            <person name="Schmidt M.A."/>
        </authorList>
    </citation>
    <scope>NUCLEOTIDE SEQUENCE [GENOMIC DNA]</scope>
    <source>
        <strain>O128:H2 / 9812 / APEC</strain>
        <strain>O26:K60 / B6 / APEC</strain>
    </source>
</reference>
<protein>
    <recommendedName>
        <fullName>Translocated intimin receptor Tir</fullName>
    </recommendedName>
    <alternativeName>
        <fullName>Secreted effector protein Tir</fullName>
    </alternativeName>
</protein>
<feature type="chain" id="PRO_0000414053" description="Translocated intimin receptor Tir">
    <location>
        <begin position="1"/>
        <end position="538"/>
    </location>
</feature>
<feature type="topological domain" description="Cytoplasmic" evidence="2">
    <location>
        <begin position="1"/>
        <end position="222"/>
    </location>
</feature>
<feature type="transmembrane region" description="Helical" evidence="2">
    <location>
        <begin position="223"/>
        <end position="243"/>
    </location>
</feature>
<feature type="topological domain" description="Extracellular" evidence="2">
    <location>
        <begin position="244"/>
        <end position="354"/>
    </location>
</feature>
<feature type="transmembrane region" description="Helical" evidence="2">
    <location>
        <begin position="355"/>
        <end position="375"/>
    </location>
</feature>
<feature type="topological domain" description="Cytoplasmic" evidence="2">
    <location>
        <begin position="376"/>
        <end position="538"/>
    </location>
</feature>
<feature type="region of interest" description="Disordered" evidence="3">
    <location>
        <begin position="1"/>
        <end position="37"/>
    </location>
</feature>
<feature type="region of interest" description="Disordered" evidence="3">
    <location>
        <begin position="184"/>
        <end position="204"/>
    </location>
</feature>
<feature type="region of interest" description="Disordered" evidence="3">
    <location>
        <begin position="279"/>
        <end position="299"/>
    </location>
</feature>
<feature type="region of interest" description="Disordered" evidence="3">
    <location>
        <begin position="313"/>
        <end position="347"/>
    </location>
</feature>
<feature type="region of interest" description="Disordered" evidence="3">
    <location>
        <begin position="380"/>
        <end position="449"/>
    </location>
</feature>
<feature type="short sequence motif" description="Essential for actin pedestal formation" evidence="1">
    <location>
        <begin position="440"/>
        <end position="442"/>
    </location>
</feature>
<feature type="compositionally biased region" description="Basic and acidic residues" evidence="3">
    <location>
        <begin position="184"/>
        <end position="196"/>
    </location>
</feature>
<feature type="compositionally biased region" description="Basic and acidic residues" evidence="3">
    <location>
        <begin position="335"/>
        <end position="346"/>
    </location>
</feature>
<feature type="compositionally biased region" description="Polar residues" evidence="3">
    <location>
        <begin position="381"/>
        <end position="411"/>
    </location>
</feature>
<feature type="compositionally biased region" description="Low complexity" evidence="3">
    <location>
        <begin position="417"/>
        <end position="430"/>
    </location>
</feature>
<name>TIR2_ECOLX</name>
<organism>
    <name type="scientific">Escherichia coli</name>
    <dbReference type="NCBI Taxonomy" id="562"/>
    <lineage>
        <taxon>Bacteria</taxon>
        <taxon>Pseudomonadati</taxon>
        <taxon>Pseudomonadota</taxon>
        <taxon>Gammaproteobacteria</taxon>
        <taxon>Enterobacterales</taxon>
        <taxon>Enterobacteriaceae</taxon>
        <taxon>Escherichia</taxon>
    </lineage>
</organism>
<evidence type="ECO:0000250" key="1"/>
<evidence type="ECO:0000255" key="2"/>
<evidence type="ECO:0000256" key="3">
    <source>
        <dbReference type="SAM" id="MobiDB-lite"/>
    </source>
</evidence>
<evidence type="ECO:0000269" key="4">
    <source>
    </source>
</evidence>
<evidence type="ECO:0000305" key="5"/>
<comment type="function">
    <text evidence="1 4">Multifunctional protein that is required for efficient pedestal formation in host epithelial cells during infection. The extracellular region acts as a receptor for bacterial intimin, allowing the bacterium to attach tightly to the host-cell surface. Simultaneously, the intracellular region initiates a signaling cascade in the host cell, which leads to actin polymerization and formation of actin pedestals at the sites of bacterial adhesion (By similarity).</text>
</comment>
<comment type="subunit">
    <text evidence="1">Interacts with intimin and host proteins.</text>
</comment>
<comment type="subcellular location">
    <subcellularLocation>
        <location evidence="1">Secreted</location>
    </subcellularLocation>
    <subcellularLocation>
        <location evidence="1">Host cell membrane</location>
        <topology evidence="1">Multi-pass membrane protein</topology>
    </subcellularLocation>
    <text evidence="1">Secreted via the type III secretion system (T3SS). Released into the host cytoplasm via T3SS and then independently inserts into the plasma membrane from a cytoplasmic location. In host cells, localizes to the tip of the actin pedestal (By similarity).</text>
</comment>
<comment type="PTM">
    <text evidence="1">Phosphorylated by host kinases.</text>
</comment>
<comment type="disruption phenotype">
    <text evidence="4">In a rabbit ligated ileal loop model, mutants do not induce formation of A/E lesions.</text>
</comment>
<comment type="similarity">
    <text evidence="5">Belongs to the Tir receptor family.</text>
</comment>
<proteinExistence type="evidence at protein level"/>